<dbReference type="EMBL" id="M21045">
    <property type="protein sequence ID" value="AAA28853.1"/>
    <property type="molecule type" value="Genomic_DNA"/>
</dbReference>
<dbReference type="EMBL" id="AE014298">
    <property type="protein sequence ID" value="AAF46299.1"/>
    <property type="molecule type" value="Genomic_DNA"/>
</dbReference>
<dbReference type="EMBL" id="AY071321">
    <property type="protein sequence ID" value="AAL48943.1"/>
    <property type="molecule type" value="mRNA"/>
</dbReference>
<dbReference type="RefSeq" id="NP_001284995.1">
    <property type="nucleotide sequence ID" value="NM_001298066.1"/>
</dbReference>
<dbReference type="RefSeq" id="NP_536352.1">
    <property type="nucleotide sequence ID" value="NM_080427.4"/>
</dbReference>
<dbReference type="SMR" id="C0HKA1"/>
<dbReference type="FunCoup" id="C0HKA1">
    <property type="interactions" value="1228"/>
</dbReference>
<dbReference type="DNASU" id="47219"/>
<dbReference type="EnsemblMetazoa" id="FBtr0071094">
    <property type="protein sequence ID" value="FBpp0071050"/>
    <property type="gene ID" value="FBgn0004403"/>
</dbReference>
<dbReference type="EnsemblMetazoa" id="FBtr0071095">
    <property type="protein sequence ID" value="FBpp0071051"/>
    <property type="gene ID" value="FBgn0004403"/>
</dbReference>
<dbReference type="EnsemblMetazoa" id="FBtr0071096">
    <property type="protein sequence ID" value="FBpp0071052"/>
    <property type="gene ID" value="FBgn0004404"/>
</dbReference>
<dbReference type="EnsemblMetazoa" id="FBtr0345291">
    <property type="protein sequence ID" value="FBpp0311458"/>
    <property type="gene ID" value="FBgn0004404"/>
</dbReference>
<dbReference type="GeneID" id="47219"/>
<dbReference type="KEGG" id="dme:Dmel_CG1524"/>
<dbReference type="KEGG" id="dme:Dmel_CG1527"/>
<dbReference type="AGR" id="FB:FBgn0004404"/>
<dbReference type="CTD" id="47218"/>
<dbReference type="CTD" id="47219"/>
<dbReference type="FlyBase" id="FBgn0004404">
    <property type="gene designation" value="RpS14b"/>
</dbReference>
<dbReference type="VEuPathDB" id="VectorBase:FBgn0004403"/>
<dbReference type="VEuPathDB" id="VectorBase:FBgn0004404"/>
<dbReference type="InParanoid" id="C0HKA1"/>
<dbReference type="OMA" id="KWGVAHI"/>
<dbReference type="OrthoDB" id="1677536at2759"/>
<dbReference type="SignaLink" id="C0HKA1"/>
<dbReference type="BioGRID-ORCS" id="47218">
    <property type="hits" value="0 hits in 1 CRISPR screen"/>
</dbReference>
<dbReference type="BioGRID-ORCS" id="47219">
    <property type="hits" value="0 hits in 1 CRISPR screen"/>
</dbReference>
<dbReference type="PRO" id="PR:C0HKA1"/>
<dbReference type="Proteomes" id="UP000000803">
    <property type="component" value="Chromosome X"/>
</dbReference>
<dbReference type="Bgee" id="FBgn0004403">
    <property type="expression patterns" value="Expressed in wing disc and 287 other cell types or tissues"/>
</dbReference>
<dbReference type="ExpressionAtlas" id="C0HKA1">
    <property type="expression patterns" value="baseline and differential"/>
</dbReference>
<dbReference type="GO" id="GO:0022626">
    <property type="term" value="C:cytosolic ribosome"/>
    <property type="evidence" value="ECO:0000314"/>
    <property type="project" value="FlyBase"/>
</dbReference>
<dbReference type="GO" id="GO:0022627">
    <property type="term" value="C:cytosolic small ribosomal subunit"/>
    <property type="evidence" value="ECO:0000318"/>
    <property type="project" value="GO_Central"/>
</dbReference>
<dbReference type="GO" id="GO:0003735">
    <property type="term" value="F:structural constituent of ribosome"/>
    <property type="evidence" value="ECO:0000314"/>
    <property type="project" value="FlyBase"/>
</dbReference>
<dbReference type="GO" id="GO:0002181">
    <property type="term" value="P:cytoplasmic translation"/>
    <property type="evidence" value="ECO:0000304"/>
    <property type="project" value="FlyBase"/>
</dbReference>
<dbReference type="GO" id="GO:0000028">
    <property type="term" value="P:ribosomal small subunit assembly"/>
    <property type="evidence" value="ECO:0000318"/>
    <property type="project" value="GO_Central"/>
</dbReference>
<dbReference type="GO" id="GO:0006412">
    <property type="term" value="P:translation"/>
    <property type="evidence" value="ECO:0000318"/>
    <property type="project" value="GO_Central"/>
</dbReference>
<dbReference type="FunFam" id="3.30.420.80:FF:000002">
    <property type="entry name" value="40S ribosomal protein S14"/>
    <property type="match status" value="1"/>
</dbReference>
<dbReference type="Gene3D" id="3.30.420.80">
    <property type="entry name" value="Ribosomal protein S11"/>
    <property type="match status" value="1"/>
</dbReference>
<dbReference type="HAMAP" id="MF_01310">
    <property type="entry name" value="Ribosomal_uS11"/>
    <property type="match status" value="1"/>
</dbReference>
<dbReference type="InterPro" id="IPR001971">
    <property type="entry name" value="Ribosomal_uS11"/>
</dbReference>
<dbReference type="InterPro" id="IPR018102">
    <property type="entry name" value="Ribosomal_uS11_CS"/>
</dbReference>
<dbReference type="InterPro" id="IPR036967">
    <property type="entry name" value="Ribosomal_uS11_sf"/>
</dbReference>
<dbReference type="NCBIfam" id="NF007176">
    <property type="entry name" value="PRK09607.1"/>
    <property type="match status" value="1"/>
</dbReference>
<dbReference type="PANTHER" id="PTHR11759">
    <property type="entry name" value="40S RIBOSOMAL PROTEIN S14/30S RIBOSOMAL PROTEIN S11"/>
    <property type="match status" value="1"/>
</dbReference>
<dbReference type="Pfam" id="PF00411">
    <property type="entry name" value="Ribosomal_S11"/>
    <property type="match status" value="1"/>
</dbReference>
<dbReference type="PIRSF" id="PIRSF002131">
    <property type="entry name" value="Ribosomal_S11"/>
    <property type="match status" value="1"/>
</dbReference>
<dbReference type="SUPFAM" id="SSF53137">
    <property type="entry name" value="Translational machinery components"/>
    <property type="match status" value="1"/>
</dbReference>
<dbReference type="PROSITE" id="PS00054">
    <property type="entry name" value="RIBOSOMAL_S11"/>
    <property type="match status" value="1"/>
</dbReference>
<protein>
    <recommendedName>
        <fullName evidence="2">Small ribosomal subunit protein uS11B</fullName>
    </recommendedName>
    <alternativeName>
        <fullName evidence="2">40S ribosomal protein S14b</fullName>
    </alternativeName>
</protein>
<accession>C0HKA1</accession>
<accession>P14130</accession>
<accession>Q0KHV1</accession>
<accession>Q8SZL7</accession>
<accession>Q9V3R5</accession>
<reference key="1">
    <citation type="journal article" date="1988" name="Mol. Cell. Biol.">
        <title>Ribosomal protein S14 is encoded by a pair of highly conserved, adjacent genes on the X chromosome of Drosophila melanogaster.</title>
        <authorList>
            <person name="Brown S.J."/>
            <person name="Rhoads D.D."/>
            <person name="Stewart M.J."/>
            <person name="van Slyke B."/>
            <person name="Chen I.-T."/>
            <person name="Johnson T.K."/>
            <person name="Denell R.E."/>
            <person name="Roufa D.J."/>
        </authorList>
    </citation>
    <scope>NUCLEOTIDE SEQUENCE [GENOMIC DNA]</scope>
</reference>
<reference key="2">
    <citation type="journal article" date="2000" name="Science">
        <title>The genome sequence of Drosophila melanogaster.</title>
        <authorList>
            <person name="Adams M.D."/>
            <person name="Celniker S.E."/>
            <person name="Holt R.A."/>
            <person name="Evans C.A."/>
            <person name="Gocayne J.D."/>
            <person name="Amanatides P.G."/>
            <person name="Scherer S.E."/>
            <person name="Li P.W."/>
            <person name="Hoskins R.A."/>
            <person name="Galle R.F."/>
            <person name="George R.A."/>
            <person name="Lewis S.E."/>
            <person name="Richards S."/>
            <person name="Ashburner M."/>
            <person name="Henderson S.N."/>
            <person name="Sutton G.G."/>
            <person name="Wortman J.R."/>
            <person name="Yandell M.D."/>
            <person name="Zhang Q."/>
            <person name="Chen L.X."/>
            <person name="Brandon R.C."/>
            <person name="Rogers Y.-H.C."/>
            <person name="Blazej R.G."/>
            <person name="Champe M."/>
            <person name="Pfeiffer B.D."/>
            <person name="Wan K.H."/>
            <person name="Doyle C."/>
            <person name="Baxter E.G."/>
            <person name="Helt G."/>
            <person name="Nelson C.R."/>
            <person name="Miklos G.L.G."/>
            <person name="Abril J.F."/>
            <person name="Agbayani A."/>
            <person name="An H.-J."/>
            <person name="Andrews-Pfannkoch C."/>
            <person name="Baldwin D."/>
            <person name="Ballew R.M."/>
            <person name="Basu A."/>
            <person name="Baxendale J."/>
            <person name="Bayraktaroglu L."/>
            <person name="Beasley E.M."/>
            <person name="Beeson K.Y."/>
            <person name="Benos P.V."/>
            <person name="Berman B.P."/>
            <person name="Bhandari D."/>
            <person name="Bolshakov S."/>
            <person name="Borkova D."/>
            <person name="Botchan M.R."/>
            <person name="Bouck J."/>
            <person name="Brokstein P."/>
            <person name="Brottier P."/>
            <person name="Burtis K.C."/>
            <person name="Busam D.A."/>
            <person name="Butler H."/>
            <person name="Cadieu E."/>
            <person name="Center A."/>
            <person name="Chandra I."/>
            <person name="Cherry J.M."/>
            <person name="Cawley S."/>
            <person name="Dahlke C."/>
            <person name="Davenport L.B."/>
            <person name="Davies P."/>
            <person name="de Pablos B."/>
            <person name="Delcher A."/>
            <person name="Deng Z."/>
            <person name="Mays A.D."/>
            <person name="Dew I."/>
            <person name="Dietz S.M."/>
            <person name="Dodson K."/>
            <person name="Doup L.E."/>
            <person name="Downes M."/>
            <person name="Dugan-Rocha S."/>
            <person name="Dunkov B.C."/>
            <person name="Dunn P."/>
            <person name="Durbin K.J."/>
            <person name="Evangelista C.C."/>
            <person name="Ferraz C."/>
            <person name="Ferriera S."/>
            <person name="Fleischmann W."/>
            <person name="Fosler C."/>
            <person name="Gabrielian A.E."/>
            <person name="Garg N.S."/>
            <person name="Gelbart W.M."/>
            <person name="Glasser K."/>
            <person name="Glodek A."/>
            <person name="Gong F."/>
            <person name="Gorrell J.H."/>
            <person name="Gu Z."/>
            <person name="Guan P."/>
            <person name="Harris M."/>
            <person name="Harris N.L."/>
            <person name="Harvey D.A."/>
            <person name="Heiman T.J."/>
            <person name="Hernandez J.R."/>
            <person name="Houck J."/>
            <person name="Hostin D."/>
            <person name="Houston K.A."/>
            <person name="Howland T.J."/>
            <person name="Wei M.-H."/>
            <person name="Ibegwam C."/>
            <person name="Jalali M."/>
            <person name="Kalush F."/>
            <person name="Karpen G.H."/>
            <person name="Ke Z."/>
            <person name="Kennison J.A."/>
            <person name="Ketchum K.A."/>
            <person name="Kimmel B.E."/>
            <person name="Kodira C.D."/>
            <person name="Kraft C.L."/>
            <person name="Kravitz S."/>
            <person name="Kulp D."/>
            <person name="Lai Z."/>
            <person name="Lasko P."/>
            <person name="Lei Y."/>
            <person name="Levitsky A.A."/>
            <person name="Li J.H."/>
            <person name="Li Z."/>
            <person name="Liang Y."/>
            <person name="Lin X."/>
            <person name="Liu X."/>
            <person name="Mattei B."/>
            <person name="McIntosh T.C."/>
            <person name="McLeod M.P."/>
            <person name="McPherson D."/>
            <person name="Merkulov G."/>
            <person name="Milshina N.V."/>
            <person name="Mobarry C."/>
            <person name="Morris J."/>
            <person name="Moshrefi A."/>
            <person name="Mount S.M."/>
            <person name="Moy M."/>
            <person name="Murphy B."/>
            <person name="Murphy L."/>
            <person name="Muzny D.M."/>
            <person name="Nelson D.L."/>
            <person name="Nelson D.R."/>
            <person name="Nelson K.A."/>
            <person name="Nixon K."/>
            <person name="Nusskern D.R."/>
            <person name="Pacleb J.M."/>
            <person name="Palazzolo M."/>
            <person name="Pittman G.S."/>
            <person name="Pan S."/>
            <person name="Pollard J."/>
            <person name="Puri V."/>
            <person name="Reese M.G."/>
            <person name="Reinert K."/>
            <person name="Remington K."/>
            <person name="Saunders R.D.C."/>
            <person name="Scheeler F."/>
            <person name="Shen H."/>
            <person name="Shue B.C."/>
            <person name="Siden-Kiamos I."/>
            <person name="Simpson M."/>
            <person name="Skupski M.P."/>
            <person name="Smith T.J."/>
            <person name="Spier E."/>
            <person name="Spradling A.C."/>
            <person name="Stapleton M."/>
            <person name="Strong R."/>
            <person name="Sun E."/>
            <person name="Svirskas R."/>
            <person name="Tector C."/>
            <person name="Turner R."/>
            <person name="Venter E."/>
            <person name="Wang A.H."/>
            <person name="Wang X."/>
            <person name="Wang Z.-Y."/>
            <person name="Wassarman D.A."/>
            <person name="Weinstock G.M."/>
            <person name="Weissenbach J."/>
            <person name="Williams S.M."/>
            <person name="Woodage T."/>
            <person name="Worley K.C."/>
            <person name="Wu D."/>
            <person name="Yang S."/>
            <person name="Yao Q.A."/>
            <person name="Ye J."/>
            <person name="Yeh R.-F."/>
            <person name="Zaveri J.S."/>
            <person name="Zhan M."/>
            <person name="Zhang G."/>
            <person name="Zhao Q."/>
            <person name="Zheng L."/>
            <person name="Zheng X.H."/>
            <person name="Zhong F.N."/>
            <person name="Zhong W."/>
            <person name="Zhou X."/>
            <person name="Zhu S.C."/>
            <person name="Zhu X."/>
            <person name="Smith H.O."/>
            <person name="Gibbs R.A."/>
            <person name="Myers E.W."/>
            <person name="Rubin G.M."/>
            <person name="Venter J.C."/>
        </authorList>
    </citation>
    <scope>NUCLEOTIDE SEQUENCE [LARGE SCALE GENOMIC DNA]</scope>
    <source>
        <strain>Berkeley</strain>
    </source>
</reference>
<reference key="3">
    <citation type="journal article" date="2002" name="Genome Biol.">
        <title>Annotation of the Drosophila melanogaster euchromatic genome: a systematic review.</title>
        <authorList>
            <person name="Misra S."/>
            <person name="Crosby M.A."/>
            <person name="Mungall C.J."/>
            <person name="Matthews B.B."/>
            <person name="Campbell K.S."/>
            <person name="Hradecky P."/>
            <person name="Huang Y."/>
            <person name="Kaminker J.S."/>
            <person name="Millburn G.H."/>
            <person name="Prochnik S.E."/>
            <person name="Smith C.D."/>
            <person name="Tupy J.L."/>
            <person name="Whitfield E.J."/>
            <person name="Bayraktaroglu L."/>
            <person name="Berman B.P."/>
            <person name="Bettencourt B.R."/>
            <person name="Celniker S.E."/>
            <person name="de Grey A.D.N.J."/>
            <person name="Drysdale R.A."/>
            <person name="Harris N.L."/>
            <person name="Richter J."/>
            <person name="Russo S."/>
            <person name="Schroeder A.J."/>
            <person name="Shu S.Q."/>
            <person name="Stapleton M."/>
            <person name="Yamada C."/>
            <person name="Ashburner M."/>
            <person name="Gelbart W.M."/>
            <person name="Rubin G.M."/>
            <person name="Lewis S.E."/>
        </authorList>
    </citation>
    <scope>GENOME REANNOTATION</scope>
    <source>
        <strain>Berkeley</strain>
    </source>
</reference>
<organism>
    <name type="scientific">Drosophila melanogaster</name>
    <name type="common">Fruit fly</name>
    <dbReference type="NCBI Taxonomy" id="7227"/>
    <lineage>
        <taxon>Eukaryota</taxon>
        <taxon>Metazoa</taxon>
        <taxon>Ecdysozoa</taxon>
        <taxon>Arthropoda</taxon>
        <taxon>Hexapoda</taxon>
        <taxon>Insecta</taxon>
        <taxon>Pterygota</taxon>
        <taxon>Neoptera</taxon>
        <taxon>Endopterygota</taxon>
        <taxon>Diptera</taxon>
        <taxon>Brachycera</taxon>
        <taxon>Muscomorpha</taxon>
        <taxon>Ephydroidea</taxon>
        <taxon>Drosophilidae</taxon>
        <taxon>Drosophila</taxon>
        <taxon>Sophophora</taxon>
    </lineage>
</organism>
<name>RS14B_DROME</name>
<comment type="similarity">
    <text evidence="2">Belongs to the universal ribosomal protein uS11 family.</text>
</comment>
<evidence type="ECO:0000256" key="1">
    <source>
        <dbReference type="SAM" id="MobiDB-lite"/>
    </source>
</evidence>
<evidence type="ECO:0000305" key="2"/>
<evidence type="ECO:0000312" key="3">
    <source>
        <dbReference type="FlyBase" id="FBgn0004404"/>
    </source>
</evidence>
<keyword id="KW-1185">Reference proteome</keyword>
<keyword id="KW-0687">Ribonucleoprotein</keyword>
<keyword id="KW-0689">Ribosomal protein</keyword>
<proteinExistence type="evidence at transcript level"/>
<feature type="chain" id="PRO_0000438898" description="Small ribosomal subunit protein uS11B">
    <location>
        <begin position="1"/>
        <end position="151"/>
    </location>
</feature>
<feature type="region of interest" description="Disordered" evidence="1">
    <location>
        <begin position="131"/>
        <end position="151"/>
    </location>
</feature>
<feature type="compositionally biased region" description="Basic residues" evidence="1">
    <location>
        <begin position="142"/>
        <end position="151"/>
    </location>
</feature>
<sequence>MAPRKAKVQKEEVQVQLGPQVRDGEIVFGVAHIYASFNDTFVHVTDLSGRETIARVTGGMKVKADRDEASPYAAMLAAQDVAEKCKTLGITALHIKLRATGGNKTKTPGPGAQSALRALARSSMKIGRIEDVTPIPSDSTRRKGGRRGRRL</sequence>
<gene>
    <name evidence="3" type="primary">RpS14b</name>
    <name evidence="3" type="ORF">CG1527</name>
</gene>